<organism>
    <name type="scientific">Saccharomyces cerevisiae (strain RM11-1a)</name>
    <name type="common">Baker's yeast</name>
    <dbReference type="NCBI Taxonomy" id="285006"/>
    <lineage>
        <taxon>Eukaryota</taxon>
        <taxon>Fungi</taxon>
        <taxon>Dikarya</taxon>
        <taxon>Ascomycota</taxon>
        <taxon>Saccharomycotina</taxon>
        <taxon>Saccharomycetes</taxon>
        <taxon>Saccharomycetales</taxon>
        <taxon>Saccharomycetaceae</taxon>
        <taxon>Saccharomyces</taxon>
    </lineage>
</organism>
<reference key="1">
    <citation type="submission" date="2005-03" db="EMBL/GenBank/DDBJ databases">
        <title>Annotation of the Saccharomyces cerevisiae RM11-1a genome.</title>
        <authorList>
            <consortium name="The Broad Institute Genome Sequencing Platform"/>
            <person name="Birren B.W."/>
            <person name="Lander E.S."/>
            <person name="Galagan J.E."/>
            <person name="Nusbaum C."/>
            <person name="Devon K."/>
            <person name="Cuomo C."/>
            <person name="Jaffe D.B."/>
            <person name="Butler J."/>
            <person name="Alvarez P."/>
            <person name="Gnerre S."/>
            <person name="Grabherr M."/>
            <person name="Kleber M."/>
            <person name="Mauceli E.W."/>
            <person name="Brockman W."/>
            <person name="MacCallum I.A."/>
            <person name="Rounsley S."/>
            <person name="Young S.K."/>
            <person name="LaButti K."/>
            <person name="Pushparaj V."/>
            <person name="DeCaprio D."/>
            <person name="Crawford M."/>
            <person name="Koehrsen M."/>
            <person name="Engels R."/>
            <person name="Montgomery P."/>
            <person name="Pearson M."/>
            <person name="Howarth C."/>
            <person name="Larson L."/>
            <person name="Luoma S."/>
            <person name="White J."/>
            <person name="O'Leary S."/>
            <person name="Kodira C.D."/>
            <person name="Zeng Q."/>
            <person name="Yandava C."/>
            <person name="Alvarado L."/>
            <person name="Pratt S."/>
            <person name="Kruglyak L."/>
        </authorList>
    </citation>
    <scope>NUCLEOTIDE SEQUENCE [LARGE SCALE GENOMIC DNA]</scope>
    <source>
        <strain>RM11-1a</strain>
    </source>
</reference>
<protein>
    <recommendedName>
        <fullName>Altered inheritance of mitochondria protein 34, mitochondrial</fullName>
    </recommendedName>
</protein>
<feature type="transit peptide" description="Mitochondrion" evidence="2">
    <location>
        <begin position="1"/>
        <end position="55"/>
    </location>
</feature>
<feature type="chain" id="PRO_0000399712" description="Altered inheritance of mitochondria protein 34, mitochondrial">
    <location>
        <begin position="56"/>
        <end position="198"/>
    </location>
</feature>
<feature type="transmembrane region" description="Helical" evidence="2">
    <location>
        <begin position="172"/>
        <end position="187"/>
    </location>
</feature>
<feature type="domain" description="SAP" evidence="3">
    <location>
        <begin position="69"/>
        <end position="103"/>
    </location>
</feature>
<keyword id="KW-0472">Membrane</keyword>
<keyword id="KW-0496">Mitochondrion</keyword>
<keyword id="KW-0809">Transit peptide</keyword>
<keyword id="KW-0812">Transmembrane</keyword>
<keyword id="KW-1133">Transmembrane helix</keyword>
<name>AIM34_YEAS1</name>
<accession>B3LLQ4</accession>
<comment type="subcellular location">
    <subcellularLocation>
        <location evidence="1">Mitochondrion membrane</location>
        <topology evidence="1">Single-pass membrane protein</topology>
    </subcellularLocation>
</comment>
<comment type="similarity">
    <text evidence="4">Belongs to the AIM34 family.</text>
</comment>
<evidence type="ECO:0000250" key="1"/>
<evidence type="ECO:0000255" key="2"/>
<evidence type="ECO:0000255" key="3">
    <source>
        <dbReference type="PROSITE-ProRule" id="PRU00186"/>
    </source>
</evidence>
<evidence type="ECO:0000305" key="4"/>
<dbReference type="EMBL" id="CH408047">
    <property type="protein sequence ID" value="EDV11507.1"/>
    <property type="molecule type" value="Genomic_DNA"/>
</dbReference>
<dbReference type="SMR" id="B3LLQ4"/>
<dbReference type="HOGENOM" id="CLU_119188_0_0_1"/>
<dbReference type="OrthoDB" id="22335at4893"/>
<dbReference type="Proteomes" id="UP000008335">
    <property type="component" value="Unassembled WGS sequence"/>
</dbReference>
<dbReference type="GO" id="GO:0031966">
    <property type="term" value="C:mitochondrial membrane"/>
    <property type="evidence" value="ECO:0007669"/>
    <property type="project" value="UniProtKB-SubCell"/>
</dbReference>
<dbReference type="FunFam" id="1.10.720.30:FF:000034">
    <property type="entry name" value="Altered inheritance of mitochondria protein 34, mitochondrial"/>
    <property type="match status" value="1"/>
</dbReference>
<dbReference type="Gene3D" id="1.10.720.30">
    <property type="entry name" value="SAP domain"/>
    <property type="match status" value="1"/>
</dbReference>
<dbReference type="InterPro" id="IPR003034">
    <property type="entry name" value="SAP_dom"/>
</dbReference>
<dbReference type="InterPro" id="IPR036361">
    <property type="entry name" value="SAP_dom_sf"/>
</dbReference>
<dbReference type="Pfam" id="PF02037">
    <property type="entry name" value="SAP"/>
    <property type="match status" value="1"/>
</dbReference>
<dbReference type="SMART" id="SM00513">
    <property type="entry name" value="SAP"/>
    <property type="match status" value="1"/>
</dbReference>
<dbReference type="SUPFAM" id="SSF68906">
    <property type="entry name" value="SAP domain"/>
    <property type="match status" value="1"/>
</dbReference>
<dbReference type="PROSITE" id="PS50800">
    <property type="entry name" value="SAP"/>
    <property type="match status" value="1"/>
</dbReference>
<sequence length="198" mass="22697">MSISLLGRIVSQQFSGIRAAGPGRSLYLPFTLLLKQPGAYKVNLHRYVHSTQTKSHLSFLMNNNDITPFQKFTVKVLKEQCKSRGLKLSGRKSDLLQRLITHDSCSNKKSSVKINEPKKKRILINDPIKITKKLVSDKTFRTIEKNISSLQNTPVIETPCDVHSHLQPRDRIFLLGFFMLSCLWWNLEPQESKPTIDH</sequence>
<proteinExistence type="inferred from homology"/>
<gene>
    <name type="primary">AIM34</name>
    <name type="ORF">SCRG_01898</name>
</gene>